<gene>
    <name evidence="1" type="primary">rpl4</name>
    <name type="ordered locus">Mboo_0533</name>
</gene>
<protein>
    <recommendedName>
        <fullName evidence="1">Large ribosomal subunit protein uL4</fullName>
    </recommendedName>
    <alternativeName>
        <fullName evidence="3">50S ribosomal protein L4</fullName>
    </alternativeName>
</protein>
<accession>A7I5P0</accession>
<proteinExistence type="inferred from homology"/>
<keyword id="KW-1185">Reference proteome</keyword>
<keyword id="KW-0687">Ribonucleoprotein</keyword>
<keyword id="KW-0689">Ribosomal protein</keyword>
<keyword id="KW-0694">RNA-binding</keyword>
<keyword id="KW-0699">rRNA-binding</keyword>
<dbReference type="EMBL" id="CP000780">
    <property type="protein sequence ID" value="ABS55051.1"/>
    <property type="molecule type" value="Genomic_DNA"/>
</dbReference>
<dbReference type="RefSeq" id="WP_012106072.1">
    <property type="nucleotide sequence ID" value="NC_009712.1"/>
</dbReference>
<dbReference type="SMR" id="A7I5P0"/>
<dbReference type="STRING" id="456442.Mboo_0533"/>
<dbReference type="GeneID" id="5411760"/>
<dbReference type="KEGG" id="mbn:Mboo_0533"/>
<dbReference type="eggNOG" id="arCOG04071">
    <property type="taxonomic scope" value="Archaea"/>
</dbReference>
<dbReference type="HOGENOM" id="CLU_026535_0_0_2"/>
<dbReference type="OrthoDB" id="10737at2157"/>
<dbReference type="Proteomes" id="UP000002408">
    <property type="component" value="Chromosome"/>
</dbReference>
<dbReference type="GO" id="GO:1990904">
    <property type="term" value="C:ribonucleoprotein complex"/>
    <property type="evidence" value="ECO:0007669"/>
    <property type="project" value="UniProtKB-KW"/>
</dbReference>
<dbReference type="GO" id="GO:0005840">
    <property type="term" value="C:ribosome"/>
    <property type="evidence" value="ECO:0007669"/>
    <property type="project" value="UniProtKB-KW"/>
</dbReference>
<dbReference type="GO" id="GO:0019843">
    <property type="term" value="F:rRNA binding"/>
    <property type="evidence" value="ECO:0007669"/>
    <property type="project" value="UniProtKB-UniRule"/>
</dbReference>
<dbReference type="GO" id="GO:0003735">
    <property type="term" value="F:structural constituent of ribosome"/>
    <property type="evidence" value="ECO:0007669"/>
    <property type="project" value="InterPro"/>
</dbReference>
<dbReference type="GO" id="GO:0006412">
    <property type="term" value="P:translation"/>
    <property type="evidence" value="ECO:0007669"/>
    <property type="project" value="UniProtKB-UniRule"/>
</dbReference>
<dbReference type="Gene3D" id="3.40.1370.10">
    <property type="match status" value="1"/>
</dbReference>
<dbReference type="HAMAP" id="MF_01328_A">
    <property type="entry name" value="Ribosomal_uL4_A"/>
    <property type="match status" value="1"/>
</dbReference>
<dbReference type="InterPro" id="IPR002136">
    <property type="entry name" value="Ribosomal_uL4"/>
</dbReference>
<dbReference type="InterPro" id="IPR023574">
    <property type="entry name" value="Ribosomal_uL4_dom_sf"/>
</dbReference>
<dbReference type="InterPro" id="IPR045240">
    <property type="entry name" value="Ribosomal_uL4_euk/arch"/>
</dbReference>
<dbReference type="InterPro" id="IPR019970">
    <property type="entry name" value="Ribosomall_uL4-arc"/>
</dbReference>
<dbReference type="NCBIfam" id="TIGR03672">
    <property type="entry name" value="rpl4p_arch"/>
    <property type="match status" value="1"/>
</dbReference>
<dbReference type="PANTHER" id="PTHR19431">
    <property type="entry name" value="60S RIBOSOMAL PROTEIN L4"/>
    <property type="match status" value="1"/>
</dbReference>
<dbReference type="Pfam" id="PF00573">
    <property type="entry name" value="Ribosomal_L4"/>
    <property type="match status" value="1"/>
</dbReference>
<dbReference type="SUPFAM" id="SSF52166">
    <property type="entry name" value="Ribosomal protein L4"/>
    <property type="match status" value="1"/>
</dbReference>
<organism>
    <name type="scientific">Methanoregula boonei (strain DSM 21154 / JCM 14090 / 6A8)</name>
    <dbReference type="NCBI Taxonomy" id="456442"/>
    <lineage>
        <taxon>Archaea</taxon>
        <taxon>Methanobacteriati</taxon>
        <taxon>Methanobacteriota</taxon>
        <taxon>Stenosarchaea group</taxon>
        <taxon>Methanomicrobia</taxon>
        <taxon>Methanomicrobiales</taxon>
        <taxon>Methanoregulaceae</taxon>
        <taxon>Methanoregula</taxon>
    </lineage>
</organism>
<name>RL4_METB6</name>
<evidence type="ECO:0000255" key="1">
    <source>
        <dbReference type="HAMAP-Rule" id="MF_01328"/>
    </source>
</evidence>
<evidence type="ECO:0000256" key="2">
    <source>
        <dbReference type="SAM" id="MobiDB-lite"/>
    </source>
</evidence>
<evidence type="ECO:0000305" key="3"/>
<comment type="function">
    <text evidence="1">One of the primary rRNA binding proteins, this protein initially binds near the 5'-end of the 23S rRNA. It is important during the early stages of 50S assembly. It makes multiple contacts with different domains of the 23S rRNA in the assembled 50S subunit and ribosome.</text>
</comment>
<comment type="function">
    <text evidence="1">Forms part of the polypeptide exit tunnel.</text>
</comment>
<comment type="subunit">
    <text evidence="1">Part of the 50S ribosomal subunit.</text>
</comment>
<comment type="similarity">
    <text evidence="1">Belongs to the universal ribosomal protein uL4 family.</text>
</comment>
<reference key="1">
    <citation type="journal article" date="2015" name="Microbiology">
        <title>Genome of Methanoregula boonei 6A8 reveals adaptations to oligotrophic peatland environments.</title>
        <authorList>
            <person name="Braeuer S."/>
            <person name="Cadillo-Quiroz H."/>
            <person name="Kyrpides N."/>
            <person name="Woyke T."/>
            <person name="Goodwin L."/>
            <person name="Detter C."/>
            <person name="Podell S."/>
            <person name="Yavitt J.B."/>
            <person name="Zinder S.H."/>
        </authorList>
    </citation>
    <scope>NUCLEOTIDE SEQUENCE [LARGE SCALE GENOMIC DNA]</scope>
    <source>
        <strain>DSM 21154 / JCM 14090 / 6A8</strain>
    </source>
</reference>
<feature type="chain" id="PRO_1000052437" description="Large ribosomal subunit protein uL4">
    <location>
        <begin position="1"/>
        <end position="248"/>
    </location>
</feature>
<feature type="region of interest" description="Disordered" evidence="2">
    <location>
        <begin position="69"/>
        <end position="92"/>
    </location>
</feature>
<sequence length="248" mass="27132">MKAQVKTIEGGVAKDIELPAMFSEEYRPDLIRKAVLALQSTRRQPHGSYPYAGICSSAVGWGSGRGASHVPRLKNGSRAAKVPQAKGGREAHPPVTAKVLIKEINAKEKQKAFRSAVAASIRADLISSRGHRFEGTVPLIFEDKFENLAKTQEVISALTNIGVYSDIERSKESRKVRAGRGKLRGRRYKQRKSLLIVTSGPEFRAARNLAGVDVVTVDQLNVEHLAPGMQAGRLTVWTESAVIRLEGR</sequence>